<evidence type="ECO:0000255" key="1">
    <source>
        <dbReference type="HAMAP-Rule" id="MF_00689"/>
    </source>
</evidence>
<name>BPT_BORBR</name>
<accession>Q7WGE5</accession>
<sequence length="244" mass="28069">MPDMSQLKELPFSTLQFYATAPYPCSYLPGRQARSQVAAPGHLINAGTYSQLVEQGFRRSGLFTYRPHCDNCHACVPVRVDAARFEPNRTQRRAWRSHQALRAFVAELAWSPEHYDLYTRYQQGRHPGGGMDEDSRTQYAQFLLTTRVNTRLVEFRAPQGQLAMISIIDVLDDGLSSVYTFYDPDMAGSLGTYSILWQIEQCRTLDLPWLYLGYWIADSRKMAYKANFRPLQMHVDGAWRETPP</sequence>
<dbReference type="EC" id="2.3.2.29" evidence="1"/>
<dbReference type="EMBL" id="BX640449">
    <property type="protein sequence ID" value="CAE34337.1"/>
    <property type="molecule type" value="Genomic_DNA"/>
</dbReference>
<dbReference type="RefSeq" id="WP_003814165.1">
    <property type="nucleotide sequence ID" value="NC_002927.3"/>
</dbReference>
<dbReference type="SMR" id="Q7WGE5"/>
<dbReference type="KEGG" id="bbr:BB3974"/>
<dbReference type="eggNOG" id="COG2935">
    <property type="taxonomic scope" value="Bacteria"/>
</dbReference>
<dbReference type="HOGENOM" id="CLU_077607_0_0_4"/>
<dbReference type="Proteomes" id="UP000001027">
    <property type="component" value="Chromosome"/>
</dbReference>
<dbReference type="GO" id="GO:0005737">
    <property type="term" value="C:cytoplasm"/>
    <property type="evidence" value="ECO:0007669"/>
    <property type="project" value="UniProtKB-SubCell"/>
</dbReference>
<dbReference type="GO" id="GO:0004057">
    <property type="term" value="F:arginyl-tRNA--protein transferase activity"/>
    <property type="evidence" value="ECO:0007669"/>
    <property type="project" value="InterPro"/>
</dbReference>
<dbReference type="GO" id="GO:0008914">
    <property type="term" value="F:leucyl-tRNA--protein transferase activity"/>
    <property type="evidence" value="ECO:0007669"/>
    <property type="project" value="UniProtKB-UniRule"/>
</dbReference>
<dbReference type="GO" id="GO:0071596">
    <property type="term" value="P:ubiquitin-dependent protein catabolic process via the N-end rule pathway"/>
    <property type="evidence" value="ECO:0007669"/>
    <property type="project" value="InterPro"/>
</dbReference>
<dbReference type="HAMAP" id="MF_00689">
    <property type="entry name" value="Bpt"/>
    <property type="match status" value="1"/>
</dbReference>
<dbReference type="InterPro" id="IPR016181">
    <property type="entry name" value="Acyl_CoA_acyltransferase"/>
</dbReference>
<dbReference type="InterPro" id="IPR017138">
    <property type="entry name" value="Asp_Glu_LeuTrfase"/>
</dbReference>
<dbReference type="InterPro" id="IPR030700">
    <property type="entry name" value="N-end_Aminoacyl_Trfase"/>
</dbReference>
<dbReference type="InterPro" id="IPR007472">
    <property type="entry name" value="N-end_Aminoacyl_Trfase_C"/>
</dbReference>
<dbReference type="InterPro" id="IPR007471">
    <property type="entry name" value="N-end_Aminoacyl_Trfase_N"/>
</dbReference>
<dbReference type="NCBIfam" id="NF002341">
    <property type="entry name" value="PRK01305.1-1"/>
    <property type="match status" value="1"/>
</dbReference>
<dbReference type="NCBIfam" id="NF002342">
    <property type="entry name" value="PRK01305.1-3"/>
    <property type="match status" value="1"/>
</dbReference>
<dbReference type="NCBIfam" id="NF002346">
    <property type="entry name" value="PRK01305.2-3"/>
    <property type="match status" value="1"/>
</dbReference>
<dbReference type="PANTHER" id="PTHR21367">
    <property type="entry name" value="ARGININE-TRNA-PROTEIN TRANSFERASE 1"/>
    <property type="match status" value="1"/>
</dbReference>
<dbReference type="PANTHER" id="PTHR21367:SF1">
    <property type="entry name" value="ARGINYL-TRNA--PROTEIN TRANSFERASE 1"/>
    <property type="match status" value="1"/>
</dbReference>
<dbReference type="Pfam" id="PF04377">
    <property type="entry name" value="ATE_C"/>
    <property type="match status" value="1"/>
</dbReference>
<dbReference type="Pfam" id="PF04376">
    <property type="entry name" value="ATE_N"/>
    <property type="match status" value="1"/>
</dbReference>
<dbReference type="PIRSF" id="PIRSF037208">
    <property type="entry name" value="ATE_pro_prd"/>
    <property type="match status" value="1"/>
</dbReference>
<dbReference type="SUPFAM" id="SSF55729">
    <property type="entry name" value="Acyl-CoA N-acyltransferases (Nat)"/>
    <property type="match status" value="1"/>
</dbReference>
<feature type="chain" id="PRO_0000195095" description="Aspartate/glutamate leucyltransferase">
    <location>
        <begin position="1"/>
        <end position="244"/>
    </location>
</feature>
<organism>
    <name type="scientific">Bordetella bronchiseptica (strain ATCC BAA-588 / NCTC 13252 / RB50)</name>
    <name type="common">Alcaligenes bronchisepticus</name>
    <dbReference type="NCBI Taxonomy" id="257310"/>
    <lineage>
        <taxon>Bacteria</taxon>
        <taxon>Pseudomonadati</taxon>
        <taxon>Pseudomonadota</taxon>
        <taxon>Betaproteobacteria</taxon>
        <taxon>Burkholderiales</taxon>
        <taxon>Alcaligenaceae</taxon>
        <taxon>Bordetella</taxon>
    </lineage>
</organism>
<reference key="1">
    <citation type="journal article" date="2003" name="Nat. Genet.">
        <title>Comparative analysis of the genome sequences of Bordetella pertussis, Bordetella parapertussis and Bordetella bronchiseptica.</title>
        <authorList>
            <person name="Parkhill J."/>
            <person name="Sebaihia M."/>
            <person name="Preston A."/>
            <person name="Murphy L.D."/>
            <person name="Thomson N.R."/>
            <person name="Harris D.E."/>
            <person name="Holden M.T.G."/>
            <person name="Churcher C.M."/>
            <person name="Bentley S.D."/>
            <person name="Mungall K.L."/>
            <person name="Cerdeno-Tarraga A.-M."/>
            <person name="Temple L."/>
            <person name="James K.D."/>
            <person name="Harris B."/>
            <person name="Quail M.A."/>
            <person name="Achtman M."/>
            <person name="Atkin R."/>
            <person name="Baker S."/>
            <person name="Basham D."/>
            <person name="Bason N."/>
            <person name="Cherevach I."/>
            <person name="Chillingworth T."/>
            <person name="Collins M."/>
            <person name="Cronin A."/>
            <person name="Davis P."/>
            <person name="Doggett J."/>
            <person name="Feltwell T."/>
            <person name="Goble A."/>
            <person name="Hamlin N."/>
            <person name="Hauser H."/>
            <person name="Holroyd S."/>
            <person name="Jagels K."/>
            <person name="Leather S."/>
            <person name="Moule S."/>
            <person name="Norberczak H."/>
            <person name="O'Neil S."/>
            <person name="Ormond D."/>
            <person name="Price C."/>
            <person name="Rabbinowitsch E."/>
            <person name="Rutter S."/>
            <person name="Sanders M."/>
            <person name="Saunders D."/>
            <person name="Seeger K."/>
            <person name="Sharp S."/>
            <person name="Simmonds M."/>
            <person name="Skelton J."/>
            <person name="Squares R."/>
            <person name="Squares S."/>
            <person name="Stevens K."/>
            <person name="Unwin L."/>
            <person name="Whitehead S."/>
            <person name="Barrell B.G."/>
            <person name="Maskell D.J."/>
        </authorList>
    </citation>
    <scope>NUCLEOTIDE SEQUENCE [LARGE SCALE GENOMIC DNA]</scope>
    <source>
        <strain>ATCC BAA-588 / NCTC 13252 / RB50</strain>
    </source>
</reference>
<protein>
    <recommendedName>
        <fullName evidence="1">Aspartate/glutamate leucyltransferase</fullName>
        <ecNumber evidence="1">2.3.2.29</ecNumber>
    </recommendedName>
</protein>
<gene>
    <name evidence="1" type="primary">bpt</name>
    <name type="ordered locus">BB3974</name>
</gene>
<proteinExistence type="inferred from homology"/>
<keyword id="KW-0012">Acyltransferase</keyword>
<keyword id="KW-0963">Cytoplasm</keyword>
<keyword id="KW-0808">Transferase</keyword>
<comment type="function">
    <text evidence="1">Functions in the N-end rule pathway of protein degradation where it conjugates Leu from its aminoacyl-tRNA to the N-termini of proteins containing an N-terminal aspartate or glutamate.</text>
</comment>
<comment type="catalytic activity">
    <reaction evidence="1">
        <text>N-terminal L-glutamyl-[protein] + L-leucyl-tRNA(Leu) = N-terminal L-leucyl-L-glutamyl-[protein] + tRNA(Leu) + H(+)</text>
        <dbReference type="Rhea" id="RHEA:50412"/>
        <dbReference type="Rhea" id="RHEA-COMP:9613"/>
        <dbReference type="Rhea" id="RHEA-COMP:9622"/>
        <dbReference type="Rhea" id="RHEA-COMP:12664"/>
        <dbReference type="Rhea" id="RHEA-COMP:12668"/>
        <dbReference type="ChEBI" id="CHEBI:15378"/>
        <dbReference type="ChEBI" id="CHEBI:64721"/>
        <dbReference type="ChEBI" id="CHEBI:78442"/>
        <dbReference type="ChEBI" id="CHEBI:78494"/>
        <dbReference type="ChEBI" id="CHEBI:133041"/>
        <dbReference type="EC" id="2.3.2.29"/>
    </reaction>
</comment>
<comment type="catalytic activity">
    <reaction evidence="1">
        <text>N-terminal L-aspartyl-[protein] + L-leucyl-tRNA(Leu) = N-terminal L-leucyl-L-aspartyl-[protein] + tRNA(Leu) + H(+)</text>
        <dbReference type="Rhea" id="RHEA:50420"/>
        <dbReference type="Rhea" id="RHEA-COMP:9613"/>
        <dbReference type="Rhea" id="RHEA-COMP:9622"/>
        <dbReference type="Rhea" id="RHEA-COMP:12669"/>
        <dbReference type="Rhea" id="RHEA-COMP:12674"/>
        <dbReference type="ChEBI" id="CHEBI:15378"/>
        <dbReference type="ChEBI" id="CHEBI:64720"/>
        <dbReference type="ChEBI" id="CHEBI:78442"/>
        <dbReference type="ChEBI" id="CHEBI:78494"/>
        <dbReference type="ChEBI" id="CHEBI:133042"/>
        <dbReference type="EC" id="2.3.2.29"/>
    </reaction>
</comment>
<comment type="subcellular location">
    <subcellularLocation>
        <location evidence="1">Cytoplasm</location>
    </subcellularLocation>
</comment>
<comment type="similarity">
    <text evidence="1">Belongs to the R-transferase family. Bpt subfamily.</text>
</comment>